<dbReference type="EMBL" id="AF514420">
    <property type="protein sequence ID" value="AAQ08117.1"/>
    <property type="molecule type" value="mRNA"/>
</dbReference>
<dbReference type="BioMuta" id="LCA10"/>
<dbReference type="DMDM" id="74712715"/>
<dbReference type="neXtProt" id="NX_Q71F78"/>
<dbReference type="InParanoid" id="Q71F78"/>
<dbReference type="PAN-GO" id="Q71F78">
    <property type="GO annotations" value="0 GO annotations based on evolutionary models"/>
</dbReference>
<dbReference type="Pharos" id="Q71F78">
    <property type="development level" value="Tdark"/>
</dbReference>
<dbReference type="Proteomes" id="UP000005640">
    <property type="component" value="Unplaced"/>
</dbReference>
<dbReference type="RNAct" id="Q71F78">
    <property type="molecule type" value="protein"/>
</dbReference>
<protein>
    <recommendedName>
        <fullName>Putative lung carcinoma-associated protein 10</fullName>
    </recommendedName>
</protein>
<reference key="1">
    <citation type="submission" date="2002-05" db="EMBL/GenBank/DDBJ databases">
        <title>Cloning and characterization of CT antigens from large cell lung carcinoma.</title>
        <authorList>
            <person name="Dong X."/>
            <person name="Chen W."/>
        </authorList>
    </citation>
    <scope>NUCLEOTIDE SEQUENCE [MRNA]</scope>
</reference>
<proteinExistence type="evidence at transcript level"/>
<sequence length="164" mass="17306">MSSCPVHDCPSWDPERLEPVETGSRGALRLRGGAPGSAAGFRASIWGPAGYPSPVGLGHPASLPRPAYSPRCPEPDARHGWGSGSNAGYRGPDRAGRTPCPAQDREGRSSSPVPPPRLKAMTSQARKQNGGALIDTVDWTREAPDSDPVMSMQKTQKPQTTVGQ</sequence>
<gene>
    <name type="primary">LCA10</name>
</gene>
<name>LCA10_HUMAN</name>
<feature type="chain" id="PRO_0000325906" description="Putative lung carcinoma-associated protein 10">
    <location>
        <begin position="1"/>
        <end position="164"/>
    </location>
</feature>
<feature type="region of interest" description="Disordered" evidence="1">
    <location>
        <begin position="1"/>
        <end position="164"/>
    </location>
</feature>
<feature type="compositionally biased region" description="Low complexity" evidence="1">
    <location>
        <begin position="23"/>
        <end position="40"/>
    </location>
</feature>
<feature type="compositionally biased region" description="Polar residues" evidence="1">
    <location>
        <begin position="152"/>
        <end position="164"/>
    </location>
</feature>
<keyword id="KW-1185">Reference proteome</keyword>
<evidence type="ECO:0000256" key="1">
    <source>
        <dbReference type="SAM" id="MobiDB-lite"/>
    </source>
</evidence>
<organism>
    <name type="scientific">Homo sapiens</name>
    <name type="common">Human</name>
    <dbReference type="NCBI Taxonomy" id="9606"/>
    <lineage>
        <taxon>Eukaryota</taxon>
        <taxon>Metazoa</taxon>
        <taxon>Chordata</taxon>
        <taxon>Craniata</taxon>
        <taxon>Vertebrata</taxon>
        <taxon>Euteleostomi</taxon>
        <taxon>Mammalia</taxon>
        <taxon>Eutheria</taxon>
        <taxon>Euarchontoglires</taxon>
        <taxon>Primates</taxon>
        <taxon>Haplorrhini</taxon>
        <taxon>Catarrhini</taxon>
        <taxon>Hominidae</taxon>
        <taxon>Homo</taxon>
    </lineage>
</organism>
<accession>Q71F78</accession>